<sequence length="42" mass="4775">MRDLKTYLSVAPVLSTLWFGSLAGLLIEINRLFPDALTFPFF</sequence>
<evidence type="ECO:0000255" key="1">
    <source>
        <dbReference type="HAMAP-Rule" id="MF_00522"/>
    </source>
</evidence>
<keyword id="KW-0150">Chloroplast</keyword>
<keyword id="KW-0472">Membrane</keyword>
<keyword id="KW-0602">Photosynthesis</keyword>
<keyword id="KW-0603">Photosystem I</keyword>
<keyword id="KW-0934">Plastid</keyword>
<keyword id="KW-0793">Thylakoid</keyword>
<keyword id="KW-0812">Transmembrane</keyword>
<keyword id="KW-1133">Transmembrane helix</keyword>
<reference key="1">
    <citation type="submission" date="2007-03" db="EMBL/GenBank/DDBJ databases">
        <title>Sequencing analysis of Lepidium virginicum JO26 chloroplast DNA.</title>
        <authorList>
            <person name="Hosouchi T."/>
            <person name="Tsuruoka H."/>
            <person name="Kotani H."/>
        </authorList>
    </citation>
    <scope>NUCLEOTIDE SEQUENCE [LARGE SCALE GENOMIC DNA]</scope>
</reference>
<protein>
    <recommendedName>
        <fullName evidence="1">Photosystem I reaction center subunit IX</fullName>
    </recommendedName>
    <alternativeName>
        <fullName evidence="1">PSI-J</fullName>
    </alternativeName>
</protein>
<accession>A4QLC6</accession>
<feature type="chain" id="PRO_0000354154" description="Photosystem I reaction center subunit IX">
    <location>
        <begin position="1"/>
        <end position="42"/>
    </location>
</feature>
<feature type="transmembrane region" description="Helical" evidence="1">
    <location>
        <begin position="7"/>
        <end position="27"/>
    </location>
</feature>
<comment type="function">
    <text evidence="1">May help in the organization of the PsaE and PsaF subunits.</text>
</comment>
<comment type="subcellular location">
    <subcellularLocation>
        <location evidence="1">Plastid</location>
        <location evidence="1">Chloroplast thylakoid membrane</location>
        <topology evidence="1">Single-pass membrane protein</topology>
    </subcellularLocation>
</comment>
<comment type="similarity">
    <text evidence="1">Belongs to the PsaJ family.</text>
</comment>
<organism>
    <name type="scientific">Lepidium virginicum</name>
    <name type="common">Virginia pepperweed</name>
    <dbReference type="NCBI Taxonomy" id="59292"/>
    <lineage>
        <taxon>Eukaryota</taxon>
        <taxon>Viridiplantae</taxon>
        <taxon>Streptophyta</taxon>
        <taxon>Embryophyta</taxon>
        <taxon>Tracheophyta</taxon>
        <taxon>Spermatophyta</taxon>
        <taxon>Magnoliopsida</taxon>
        <taxon>eudicotyledons</taxon>
        <taxon>Gunneridae</taxon>
        <taxon>Pentapetalae</taxon>
        <taxon>rosids</taxon>
        <taxon>malvids</taxon>
        <taxon>Brassicales</taxon>
        <taxon>Brassicaceae</taxon>
        <taxon>Lepidieae</taxon>
        <taxon>Lepidium</taxon>
    </lineage>
</organism>
<dbReference type="EMBL" id="AP009374">
    <property type="protein sequence ID" value="BAF50481.1"/>
    <property type="molecule type" value="Genomic_DNA"/>
</dbReference>
<dbReference type="RefSeq" id="YP_001123657.1">
    <property type="nucleotide sequence ID" value="NC_009273.1"/>
</dbReference>
<dbReference type="SMR" id="A4QLC6"/>
<dbReference type="GeneID" id="4961997"/>
<dbReference type="GO" id="GO:0009535">
    <property type="term" value="C:chloroplast thylakoid membrane"/>
    <property type="evidence" value="ECO:0007669"/>
    <property type="project" value="UniProtKB-SubCell"/>
</dbReference>
<dbReference type="GO" id="GO:0009522">
    <property type="term" value="C:photosystem I"/>
    <property type="evidence" value="ECO:0007669"/>
    <property type="project" value="UniProtKB-KW"/>
</dbReference>
<dbReference type="GO" id="GO:0015979">
    <property type="term" value="P:photosynthesis"/>
    <property type="evidence" value="ECO:0007669"/>
    <property type="project" value="UniProtKB-UniRule"/>
</dbReference>
<dbReference type="FunFam" id="1.20.5.510:FF:000001">
    <property type="entry name" value="Photosystem I reaction center subunit IX"/>
    <property type="match status" value="1"/>
</dbReference>
<dbReference type="Gene3D" id="1.20.5.510">
    <property type="entry name" value="Single helix bin"/>
    <property type="match status" value="1"/>
</dbReference>
<dbReference type="HAMAP" id="MF_00522">
    <property type="entry name" value="PSI_PsaJ"/>
    <property type="match status" value="1"/>
</dbReference>
<dbReference type="InterPro" id="IPR002615">
    <property type="entry name" value="PSI_PsaJ"/>
</dbReference>
<dbReference type="InterPro" id="IPR036062">
    <property type="entry name" value="PSI_PsaJ_sf"/>
</dbReference>
<dbReference type="PANTHER" id="PTHR36082">
    <property type="match status" value="1"/>
</dbReference>
<dbReference type="PANTHER" id="PTHR36082:SF2">
    <property type="entry name" value="PHOTOSYSTEM I REACTION CENTER SUBUNIT IX"/>
    <property type="match status" value="1"/>
</dbReference>
<dbReference type="Pfam" id="PF01701">
    <property type="entry name" value="PSI_PsaJ"/>
    <property type="match status" value="1"/>
</dbReference>
<dbReference type="SUPFAM" id="SSF81544">
    <property type="entry name" value="Subunit IX of photosystem I reaction centre, PsaJ"/>
    <property type="match status" value="1"/>
</dbReference>
<proteinExistence type="inferred from homology"/>
<gene>
    <name evidence="1" type="primary">psaJ</name>
</gene>
<geneLocation type="chloroplast"/>
<name>PSAJ_LEPVR</name>